<organism>
    <name type="scientific">Vaccinium vitis-idaea</name>
    <name type="common">Mountain cranberry</name>
    <dbReference type="NCBI Taxonomy" id="180772"/>
    <lineage>
        <taxon>Eukaryota</taxon>
        <taxon>Viridiplantae</taxon>
        <taxon>Streptophyta</taxon>
        <taxon>Embryophyta</taxon>
        <taxon>Tracheophyta</taxon>
        <taxon>Spermatophyta</taxon>
        <taxon>Magnoliopsida</taxon>
        <taxon>eudicotyledons</taxon>
        <taxon>Gunneridae</taxon>
        <taxon>Pentapetalae</taxon>
        <taxon>asterids</taxon>
        <taxon>Ericales</taxon>
        <taxon>Ericaceae</taxon>
        <taxon>Vaccinioideae</taxon>
        <taxon>Vaccinieae</taxon>
        <taxon>Vaccinium</taxon>
    </lineage>
</organism>
<proteinExistence type="inferred from homology"/>
<reference key="1">
    <citation type="journal article" date="2002" name="Am. J. Bot.">
        <title>Phylogenetic relationships within the blueberry tribe (Vaccinieae, Ericaceae) based on sequence data from matk and nuclear ribosomal ITS regions, with comments on the placement of Satyria.</title>
        <authorList>
            <person name="Kron K.A."/>
            <person name="Powell E.A."/>
            <person name="Luteyn J.L."/>
        </authorList>
        <dbReference type="AGRICOLA" id="IND23311512"/>
    </citation>
    <scope>NUCLEOTIDE SEQUENCE [GENOMIC DNA]</scope>
</reference>
<dbReference type="EMBL" id="AF382819">
    <property type="protein sequence ID" value="AAL56543.1"/>
    <property type="molecule type" value="Genomic_DNA"/>
</dbReference>
<dbReference type="GO" id="GO:0009507">
    <property type="term" value="C:chloroplast"/>
    <property type="evidence" value="ECO:0007669"/>
    <property type="project" value="UniProtKB-SubCell"/>
</dbReference>
<dbReference type="GO" id="GO:0003723">
    <property type="term" value="F:RNA binding"/>
    <property type="evidence" value="ECO:0007669"/>
    <property type="project" value="UniProtKB-KW"/>
</dbReference>
<dbReference type="GO" id="GO:0006397">
    <property type="term" value="P:mRNA processing"/>
    <property type="evidence" value="ECO:0007669"/>
    <property type="project" value="UniProtKB-KW"/>
</dbReference>
<dbReference type="GO" id="GO:0008380">
    <property type="term" value="P:RNA splicing"/>
    <property type="evidence" value="ECO:0007669"/>
    <property type="project" value="UniProtKB-UniRule"/>
</dbReference>
<dbReference type="GO" id="GO:0008033">
    <property type="term" value="P:tRNA processing"/>
    <property type="evidence" value="ECO:0007669"/>
    <property type="project" value="UniProtKB-KW"/>
</dbReference>
<dbReference type="HAMAP" id="MF_01390">
    <property type="entry name" value="MatK"/>
    <property type="match status" value="1"/>
</dbReference>
<dbReference type="InterPro" id="IPR024937">
    <property type="entry name" value="Domain_X"/>
</dbReference>
<dbReference type="InterPro" id="IPR002866">
    <property type="entry name" value="Maturase_MatK"/>
</dbReference>
<dbReference type="InterPro" id="IPR024942">
    <property type="entry name" value="Maturase_MatK_N"/>
</dbReference>
<dbReference type="PANTHER" id="PTHR34811">
    <property type="entry name" value="MATURASE K"/>
    <property type="match status" value="1"/>
</dbReference>
<dbReference type="PANTHER" id="PTHR34811:SF1">
    <property type="entry name" value="MATURASE K"/>
    <property type="match status" value="1"/>
</dbReference>
<dbReference type="Pfam" id="PF01348">
    <property type="entry name" value="Intron_maturas2"/>
    <property type="match status" value="1"/>
</dbReference>
<dbReference type="Pfam" id="PF01824">
    <property type="entry name" value="MatK_N"/>
    <property type="match status" value="1"/>
</dbReference>
<protein>
    <recommendedName>
        <fullName evidence="1">Maturase K</fullName>
    </recommendedName>
    <alternativeName>
        <fullName evidence="1">Intron maturase</fullName>
    </alternativeName>
</protein>
<geneLocation type="chloroplast"/>
<accession>Q8WIJ9</accession>
<name>MATK_VACVI</name>
<feature type="chain" id="PRO_0000143776" description="Maturase K">
    <location>
        <begin position="1"/>
        <end position="502"/>
    </location>
</feature>
<gene>
    <name evidence="1" type="primary">matK</name>
</gene>
<evidence type="ECO:0000255" key="1">
    <source>
        <dbReference type="HAMAP-Rule" id="MF_01390"/>
    </source>
</evidence>
<sequence length="502" mass="59495">MEEFKRYLELDRSQQHDFIYPLIFQEYIYALAHDRGLNRSIVFENRDYDNKSSLLIRKRLITXXXXXXXXXXXXXXXXKNKFLGYNTNFDSQMIFEGFAVVVEIPFYLQLLSSLEGKEIVKSHNLRSLHSIFPXXXXXXXXXXXXXXXXXXXXXXMEILVRTLRYWVKDPSSLHLLRFFLHEYPNRNSLITPKKYSFSFSKRNQKFFLFLYNFHVCEYESIFVFLRNQSSHLCSISFETFLERILFYKKIELEVFVKDFKGILWVFKDPFLHYVRYRGKSILASNGSSLLMNKWKYYLVNFWECYFSIWAQPRRIHINQLSNNSFDFLGYLSSVRLKPSMVRTQMIENSFLIENASKKFDTLVPITPMIASLSKAKFCNVLGHPMNKXVWDGLSDSDIIERIGRLYXNLSHYYSGSLKKMNLXRIKFILRILLCGTLASKHKGTLRSVLNRLGVGLLVEFITEEEQVFYLTFQKASSTSRKLYQRRIWYLDIFCVNDTANHE</sequence>
<keyword id="KW-0150">Chloroplast</keyword>
<keyword id="KW-0507">mRNA processing</keyword>
<keyword id="KW-0934">Plastid</keyword>
<keyword id="KW-0694">RNA-binding</keyword>
<keyword id="KW-0819">tRNA processing</keyword>
<comment type="function">
    <text evidence="1">Usually encoded in the trnK tRNA gene intron. Probably assists in splicing its own and other chloroplast group II introns.</text>
</comment>
<comment type="subcellular location">
    <subcellularLocation>
        <location>Plastid</location>
        <location>Chloroplast</location>
    </subcellularLocation>
</comment>
<comment type="similarity">
    <text evidence="1">Belongs to the intron maturase 2 family. MatK subfamily.</text>
</comment>